<sequence length="1072" mass="121223">MKSLKGRLLFLRKFVFFSLLILLFAHGASSSSSSFNYFDKRTNGKANNELALFSPTADSPSSVDGVLELPSAENVFAESSLYNAFIVATVDGSLHSYDRITGQELWSLFTNANPGLSYTKDENSLLSSKFLSQSNFKSYNSTHGEFYSDSTLNISYLSDDDTVWFVEPIDGGILYAFNLQTGLVRLPHSIKDLVHASPIRLLNNNVFVGSKNTTLFTIDVSNGDIVSQYPSGHRYETHHSVHNLGTKRDSVPSGADSDLSFKDPSGKKLSESLDLLDDFNYQVTVSNKSFVDIARTEYFITIYSDSNVILDLVYIDWTPTKNEIMYESFHSSSFDSKLALSSYDSSLHIVDTHSKFIKQNIPLMSPAATVFDIVTLPHNKKIDKSQTPAKFPTSVLLRQPIDTYLETMFPQIARNKTEHVYINHIGNAWFAMSERHYPLVSLAPEASFLYYNGFYIPLNSIFGLHSLMATPKPFFALPGLPGYDIPSYVESEGSTKTLPSIGKKPIPLLDPNPISSTPISITFWVIMFLSVSFTIVTFFSILRIRSSEVRPLKSQKNTVSINNKIDTSKRRRKGKRRKRVSDEHSASSNFNEIESQASFEQNQTLDILSENIVEIQDKSTDPLQKSLDSSLKSHLPEATVIQNTDGSVTVNSLTVYPEVIGYGSHGTIVYRGVYEDREVAVKRVLMEFYDLASREITLLQQSDNHPNIVRYYCKQKSDQFLYIVIELCKCNLSDLIEKPIAYDDLFKSIDLVSLLYQIAFGVSHLHSLDLVHRDLKPQNILLVVNNSPNLSKTRVRALISDFGLSKKLDFNQSSLRNTTFEAAGSYGWRSPEILSGSLSQQSKEIQVKTREGRIRQASHATDIFALGCIFYYTLTGGMHPFGSHYDCEGNILKGNYCLVHLQSLGECGVLAADLIEDMIAFEPSKRPTIEVVLNHPLFWDYAKKLDFLIDVSDRFEVEERDPPSPLLQMLENNSKSVIGENWTTCLHSSLVDNLGKYRKYDGSKILDILRVLRNKRHHYQDLPESVRRVLGDLPDGFTSYFVEKFPMLLLHCYHLVKDVLYEESQFKRYLEY</sequence>
<organism>
    <name type="scientific">Schizosaccharomyces pombe (strain 972 / ATCC 24843)</name>
    <name type="common">Fission yeast</name>
    <dbReference type="NCBI Taxonomy" id="284812"/>
    <lineage>
        <taxon>Eukaryota</taxon>
        <taxon>Fungi</taxon>
        <taxon>Dikarya</taxon>
        <taxon>Ascomycota</taxon>
        <taxon>Taphrinomycotina</taxon>
        <taxon>Schizosaccharomycetes</taxon>
        <taxon>Schizosaccharomycetales</taxon>
        <taxon>Schizosaccharomycetaceae</taxon>
        <taxon>Schizosaccharomyces</taxon>
    </lineage>
</organism>
<accession>O94537</accession>
<dbReference type="EC" id="2.7.11.1" evidence="11"/>
<dbReference type="EC" id="3.1.26.-" evidence="1"/>
<dbReference type="EMBL" id="CU329670">
    <property type="protein sequence ID" value="CAA22846.1"/>
    <property type="molecule type" value="Genomic_DNA"/>
</dbReference>
<dbReference type="PIR" id="T37742">
    <property type="entry name" value="T37742"/>
</dbReference>
<dbReference type="RefSeq" id="NP_593384.1">
    <property type="nucleotide sequence ID" value="NM_001018816.2"/>
</dbReference>
<dbReference type="SMR" id="O94537"/>
<dbReference type="BioGRID" id="279225">
    <property type="interactions" value="31"/>
</dbReference>
<dbReference type="FunCoup" id="O94537">
    <property type="interactions" value="154"/>
</dbReference>
<dbReference type="STRING" id="284812.O94537"/>
<dbReference type="iPTMnet" id="O94537"/>
<dbReference type="PaxDb" id="4896-SPAC167.01.1"/>
<dbReference type="DNASU" id="2542776"/>
<dbReference type="EnsemblFungi" id="SPAC167.01.1">
    <property type="protein sequence ID" value="SPAC167.01.1:pep"/>
    <property type="gene ID" value="SPAC167.01"/>
</dbReference>
<dbReference type="GeneID" id="2542776"/>
<dbReference type="KEGG" id="spo:2542776"/>
<dbReference type="PomBase" id="SPAC167.01">
    <property type="gene designation" value="ire1"/>
</dbReference>
<dbReference type="VEuPathDB" id="FungiDB:SPAC167.01"/>
<dbReference type="eggNOG" id="KOG1027">
    <property type="taxonomic scope" value="Eukaryota"/>
</dbReference>
<dbReference type="HOGENOM" id="CLU_004875_2_1_1"/>
<dbReference type="InParanoid" id="O94537"/>
<dbReference type="OMA" id="IRYYCSE"/>
<dbReference type="PhylomeDB" id="O94537"/>
<dbReference type="Reactome" id="R-SPO-381070">
    <property type="pathway name" value="IRE1alpha activates chaperones"/>
</dbReference>
<dbReference type="PRO" id="PR:O94537"/>
<dbReference type="Proteomes" id="UP000002485">
    <property type="component" value="Chromosome I"/>
</dbReference>
<dbReference type="GO" id="GO:0005783">
    <property type="term" value="C:endoplasmic reticulum"/>
    <property type="evidence" value="ECO:0007005"/>
    <property type="project" value="PomBase"/>
</dbReference>
<dbReference type="GO" id="GO:1990604">
    <property type="term" value="C:IRE1-TRAF2-ASK1 complex"/>
    <property type="evidence" value="ECO:0000318"/>
    <property type="project" value="GO_Central"/>
</dbReference>
<dbReference type="GO" id="GO:0005524">
    <property type="term" value="F:ATP binding"/>
    <property type="evidence" value="ECO:0000255"/>
    <property type="project" value="PomBase"/>
</dbReference>
<dbReference type="GO" id="GO:0046872">
    <property type="term" value="F:metal ion binding"/>
    <property type="evidence" value="ECO:0007669"/>
    <property type="project" value="UniProtKB-KW"/>
</dbReference>
<dbReference type="GO" id="GO:0106310">
    <property type="term" value="F:protein serine kinase activity"/>
    <property type="evidence" value="ECO:0007669"/>
    <property type="project" value="RHEA"/>
</dbReference>
<dbReference type="GO" id="GO:0004674">
    <property type="term" value="F:protein serine/threonine kinase activity"/>
    <property type="evidence" value="ECO:0000318"/>
    <property type="project" value="GO_Central"/>
</dbReference>
<dbReference type="GO" id="GO:0004521">
    <property type="term" value="F:RNA endonuclease activity"/>
    <property type="evidence" value="ECO:0000315"/>
    <property type="project" value="PomBase"/>
</dbReference>
<dbReference type="GO" id="GO:0051082">
    <property type="term" value="F:unfolded protein binding"/>
    <property type="evidence" value="ECO:0000318"/>
    <property type="project" value="GO_Central"/>
</dbReference>
<dbReference type="GO" id="GO:0036498">
    <property type="term" value="P:IRE1-mediated unfolded protein response"/>
    <property type="evidence" value="ECO:0000315"/>
    <property type="project" value="PomBase"/>
</dbReference>
<dbReference type="GO" id="GO:0006397">
    <property type="term" value="P:mRNA processing"/>
    <property type="evidence" value="ECO:0007669"/>
    <property type="project" value="InterPro"/>
</dbReference>
<dbReference type="GO" id="GO:0010628">
    <property type="term" value="P:positive regulation of gene expression"/>
    <property type="evidence" value="ECO:0000315"/>
    <property type="project" value="PomBase"/>
</dbReference>
<dbReference type="GO" id="GO:0140501">
    <property type="term" value="P:positive regulation of reticulophagy"/>
    <property type="evidence" value="ECO:0000315"/>
    <property type="project" value="PomBase"/>
</dbReference>
<dbReference type="CDD" id="cd10422">
    <property type="entry name" value="RNase_Ire1"/>
    <property type="match status" value="1"/>
</dbReference>
<dbReference type="CDD" id="cd13982">
    <property type="entry name" value="STKc_IRE1"/>
    <property type="match status" value="1"/>
</dbReference>
<dbReference type="FunFam" id="3.30.200.20:FF:000077">
    <property type="entry name" value="Putative Serine/threonine-protein kinase/endoribonuclease IRE1"/>
    <property type="match status" value="1"/>
</dbReference>
<dbReference type="FunFam" id="1.10.510.10:FF:001420">
    <property type="entry name" value="Serine/threonine-protein kinase ppk4"/>
    <property type="match status" value="1"/>
</dbReference>
<dbReference type="FunFam" id="1.20.1440.180:FF:000002">
    <property type="entry name" value="Serine/threonine-protein kinase/endoribonuclease IRE1"/>
    <property type="match status" value="1"/>
</dbReference>
<dbReference type="Gene3D" id="1.20.1440.180">
    <property type="entry name" value="KEN domain"/>
    <property type="match status" value="1"/>
</dbReference>
<dbReference type="Gene3D" id="3.30.200.20">
    <property type="entry name" value="Phosphorylase Kinase, domain 1"/>
    <property type="match status" value="1"/>
</dbReference>
<dbReference type="Gene3D" id="1.10.510.10">
    <property type="entry name" value="Transferase(Phosphotransferase) domain 1"/>
    <property type="match status" value="1"/>
</dbReference>
<dbReference type="Gene3D" id="2.130.10.10">
    <property type="entry name" value="YVTN repeat-like/Quinoprotein amine dehydrogenase"/>
    <property type="match status" value="1"/>
</dbReference>
<dbReference type="InterPro" id="IPR045133">
    <property type="entry name" value="IRE1/2-like"/>
</dbReference>
<dbReference type="InterPro" id="IPR010513">
    <property type="entry name" value="KEN_dom"/>
</dbReference>
<dbReference type="InterPro" id="IPR038357">
    <property type="entry name" value="KEN_sf"/>
</dbReference>
<dbReference type="InterPro" id="IPR011009">
    <property type="entry name" value="Kinase-like_dom_sf"/>
</dbReference>
<dbReference type="InterPro" id="IPR018391">
    <property type="entry name" value="PQQ_b-propeller_rpt"/>
</dbReference>
<dbReference type="InterPro" id="IPR000719">
    <property type="entry name" value="Prot_kinase_dom"/>
</dbReference>
<dbReference type="InterPro" id="IPR011047">
    <property type="entry name" value="Quinoprotein_ADH-like_sf"/>
</dbReference>
<dbReference type="InterPro" id="IPR008271">
    <property type="entry name" value="Ser/Thr_kinase_AS"/>
</dbReference>
<dbReference type="InterPro" id="IPR015943">
    <property type="entry name" value="WD40/YVTN_repeat-like_dom_sf"/>
</dbReference>
<dbReference type="PANTHER" id="PTHR13954">
    <property type="entry name" value="IRE1-RELATED"/>
    <property type="match status" value="1"/>
</dbReference>
<dbReference type="PANTHER" id="PTHR13954:SF6">
    <property type="entry name" value="NON-SPECIFIC SERINE_THREONINE PROTEIN KINASE"/>
    <property type="match status" value="1"/>
</dbReference>
<dbReference type="Pfam" id="PF00069">
    <property type="entry name" value="Pkinase"/>
    <property type="match status" value="1"/>
</dbReference>
<dbReference type="Pfam" id="PF06479">
    <property type="entry name" value="Ribonuc_2-5A"/>
    <property type="match status" value="1"/>
</dbReference>
<dbReference type="SMART" id="SM00564">
    <property type="entry name" value="PQQ"/>
    <property type="match status" value="3"/>
</dbReference>
<dbReference type="SMART" id="SM00580">
    <property type="entry name" value="PUG"/>
    <property type="match status" value="1"/>
</dbReference>
<dbReference type="SMART" id="SM00220">
    <property type="entry name" value="S_TKc"/>
    <property type="match status" value="1"/>
</dbReference>
<dbReference type="SUPFAM" id="SSF56112">
    <property type="entry name" value="Protein kinase-like (PK-like)"/>
    <property type="match status" value="1"/>
</dbReference>
<dbReference type="SUPFAM" id="SSF50998">
    <property type="entry name" value="Quinoprotein alcohol dehydrogenase-like"/>
    <property type="match status" value="1"/>
</dbReference>
<dbReference type="PROSITE" id="PS51392">
    <property type="entry name" value="KEN"/>
    <property type="match status" value="1"/>
</dbReference>
<dbReference type="PROSITE" id="PS50011">
    <property type="entry name" value="PROTEIN_KINASE_DOM"/>
    <property type="match status" value="1"/>
</dbReference>
<dbReference type="PROSITE" id="PS00108">
    <property type="entry name" value="PROTEIN_KINASE_ST"/>
    <property type="match status" value="1"/>
</dbReference>
<evidence type="ECO:0000250" key="1">
    <source>
        <dbReference type="UniProtKB" id="P32361"/>
    </source>
</evidence>
<evidence type="ECO:0000255" key="2"/>
<evidence type="ECO:0000255" key="3">
    <source>
        <dbReference type="PROSITE-ProRule" id="PRU00159"/>
    </source>
</evidence>
<evidence type="ECO:0000255" key="4">
    <source>
        <dbReference type="PROSITE-ProRule" id="PRU00725"/>
    </source>
</evidence>
<evidence type="ECO:0000255" key="5">
    <source>
        <dbReference type="PROSITE-ProRule" id="PRU10027"/>
    </source>
</evidence>
<evidence type="ECO:0000256" key="6">
    <source>
        <dbReference type="SAM" id="MobiDB-lite"/>
    </source>
</evidence>
<evidence type="ECO:0000269" key="7">
    <source>
    </source>
</evidence>
<evidence type="ECO:0000269" key="8">
    <source>
    </source>
</evidence>
<evidence type="ECO:0000269" key="9">
    <source ref="5"/>
</evidence>
<evidence type="ECO:0000303" key="10">
    <source>
    </source>
</evidence>
<evidence type="ECO:0000305" key="11">
    <source>
    </source>
</evidence>
<keyword id="KW-0067">ATP-binding</keyword>
<keyword id="KW-0256">Endoplasmic reticulum</keyword>
<keyword id="KW-0378">Hydrolase</keyword>
<keyword id="KW-0418">Kinase</keyword>
<keyword id="KW-0460">Magnesium</keyword>
<keyword id="KW-0472">Membrane</keyword>
<keyword id="KW-0479">Metal-binding</keyword>
<keyword id="KW-0547">Nucleotide-binding</keyword>
<keyword id="KW-1185">Reference proteome</keyword>
<keyword id="KW-0723">Serine/threonine-protein kinase</keyword>
<keyword id="KW-0732">Signal</keyword>
<keyword id="KW-0808">Transferase</keyword>
<keyword id="KW-0812">Transmembrane</keyword>
<keyword id="KW-1133">Transmembrane helix</keyword>
<name>IRE1_SCHPO</name>
<proteinExistence type="evidence at protein level"/>
<gene>
    <name type="primary">ire1</name>
    <name type="synonym">ppk4</name>
    <name type="ORF">SPAC167.01</name>
</gene>
<feature type="signal peptide" evidence="2">
    <location>
        <begin position="1"/>
        <end position="30"/>
    </location>
</feature>
<feature type="chain" id="PRO_0000256815" description="Sensor for unfolded proteins in the ER ire1">
    <location>
        <begin position="31"/>
        <end position="1072"/>
    </location>
</feature>
<feature type="topological domain" description="Lumenal" evidence="2">
    <location>
        <begin position="31"/>
        <end position="518"/>
    </location>
</feature>
<feature type="transmembrane region" description="Helical" evidence="2">
    <location>
        <begin position="519"/>
        <end position="539"/>
    </location>
</feature>
<feature type="topological domain" description="Cytoplasmic" evidence="2">
    <location>
        <begin position="540"/>
        <end position="1072"/>
    </location>
</feature>
<feature type="domain" description="Protein kinase" evidence="3">
    <location>
        <begin position="654"/>
        <end position="938"/>
    </location>
</feature>
<feature type="domain" description="KEN" evidence="4">
    <location>
        <begin position="941"/>
        <end position="1072"/>
    </location>
</feature>
<feature type="region of interest" description="Disordered" evidence="6">
    <location>
        <begin position="243"/>
        <end position="262"/>
    </location>
</feature>
<feature type="region of interest" description="Disordered" evidence="6">
    <location>
        <begin position="553"/>
        <end position="593"/>
    </location>
</feature>
<feature type="compositionally biased region" description="Polar residues" evidence="6">
    <location>
        <begin position="554"/>
        <end position="565"/>
    </location>
</feature>
<feature type="compositionally biased region" description="Basic residues" evidence="6">
    <location>
        <begin position="569"/>
        <end position="579"/>
    </location>
</feature>
<feature type="active site" description="Proton acceptor" evidence="3 5">
    <location>
        <position position="774"/>
    </location>
</feature>
<feature type="binding site" evidence="3">
    <location>
        <begin position="660"/>
        <end position="668"/>
    </location>
    <ligand>
        <name>ATP</name>
        <dbReference type="ChEBI" id="CHEBI:30616"/>
    </ligand>
</feature>
<feature type="binding site" evidence="1">
    <location>
        <position position="664"/>
    </location>
    <ligand>
        <name>ADP</name>
        <dbReference type="ChEBI" id="CHEBI:456216"/>
    </ligand>
</feature>
<feature type="binding site" evidence="1">
    <location>
        <position position="682"/>
    </location>
    <ligand>
        <name>ADP</name>
        <dbReference type="ChEBI" id="CHEBI:456216"/>
    </ligand>
</feature>
<feature type="binding site" evidence="3">
    <location>
        <position position="682"/>
    </location>
    <ligand>
        <name>ATP</name>
        <dbReference type="ChEBI" id="CHEBI:30616"/>
    </ligand>
</feature>
<feature type="binding site" evidence="1">
    <location>
        <position position="726"/>
    </location>
    <ligand>
        <name>ADP</name>
        <dbReference type="ChEBI" id="CHEBI:456216"/>
    </ligand>
</feature>
<feature type="binding site" evidence="1">
    <location>
        <position position="728"/>
    </location>
    <ligand>
        <name>ADP</name>
        <dbReference type="ChEBI" id="CHEBI:456216"/>
    </ligand>
</feature>
<feature type="binding site" evidence="1">
    <location>
        <position position="731"/>
    </location>
    <ligand>
        <name>ADP</name>
        <dbReference type="ChEBI" id="CHEBI:456216"/>
    </ligand>
</feature>
<feature type="binding site" evidence="1">
    <location>
        <position position="779"/>
    </location>
    <ligand>
        <name>Mg(2+)</name>
        <dbReference type="ChEBI" id="CHEBI:18420"/>
    </ligand>
</feature>
<feature type="binding site" evidence="1">
    <location>
        <position position="801"/>
    </location>
    <ligand>
        <name>Mg(2+)</name>
        <dbReference type="ChEBI" id="CHEBI:18420"/>
    </ligand>
</feature>
<feature type="mutagenesis site" description="Blocks RNase activity and impairs the ability to sustain cell growth on ER stress-inducing media." evidence="8">
    <original>H</original>
    <variation>N</variation>
    <location>
        <position position="1018"/>
    </location>
</feature>
<protein>
    <recommendedName>
        <fullName evidence="10">Sensor for unfolded proteins in the ER ire1</fullName>
    </recommendedName>
    <domain>
        <recommendedName>
            <fullName>Serine/threonine-protein kinase</fullName>
            <ecNumber evidence="11">2.7.11.1</ecNumber>
        </recommendedName>
    </domain>
    <domain>
        <recommendedName>
            <fullName>Endoribonuclease</fullName>
            <ecNumber evidence="1">3.1.26.-</ecNumber>
        </recommendedName>
        <alternativeName>
            <fullName evidence="10">Serine/threonine-protein kinase 4</fullName>
        </alternativeName>
    </domain>
</protein>
<comment type="function">
    <text evidence="8 9">Endoplasmic reticulum (ER) membrane-resident kinase/endoribonuclease involved in unfolded protein response (UPR) (PubMed:23066505). Initiates the selective decay of a subset of ER-localized-mRNAs that is required to survive ER stress (PubMed:23066505). Rather than relying on a transcriptional program to up-regulate genes that enhance ER protein folding capacity as in S.cerevisiae, S.pombe cells reduce the amount of specific proteins entering the organelle by decreasing the level of ER-targeted mRNAs using ire1-dependent mRNA degradation (PubMed:23066505). The sole mRNA cleaved upon ire1 activation that escapes decay is the ER chaperone bip1 mRNA which is more stable and hence is present at an increased steady-state after ire1 cleavage (PubMed:23066505). Promotes ER stress-induced ER-phagy and via up-regulation of the protein level of the ER-phagy receptor epr1 (Ref.5).</text>
</comment>
<comment type="catalytic activity">
    <reaction evidence="11">
        <text>L-seryl-[protein] + ATP = O-phospho-L-seryl-[protein] + ADP + H(+)</text>
        <dbReference type="Rhea" id="RHEA:17989"/>
        <dbReference type="Rhea" id="RHEA-COMP:9863"/>
        <dbReference type="Rhea" id="RHEA-COMP:11604"/>
        <dbReference type="ChEBI" id="CHEBI:15378"/>
        <dbReference type="ChEBI" id="CHEBI:29999"/>
        <dbReference type="ChEBI" id="CHEBI:30616"/>
        <dbReference type="ChEBI" id="CHEBI:83421"/>
        <dbReference type="ChEBI" id="CHEBI:456216"/>
        <dbReference type="EC" id="2.7.11.1"/>
    </reaction>
    <physiologicalReaction direction="left-to-right" evidence="11">
        <dbReference type="Rhea" id="RHEA:17990"/>
    </physiologicalReaction>
</comment>
<comment type="catalytic activity">
    <reaction evidence="11">
        <text>L-threonyl-[protein] + ATP = O-phospho-L-threonyl-[protein] + ADP + H(+)</text>
        <dbReference type="Rhea" id="RHEA:46608"/>
        <dbReference type="Rhea" id="RHEA-COMP:11060"/>
        <dbReference type="Rhea" id="RHEA-COMP:11605"/>
        <dbReference type="ChEBI" id="CHEBI:15378"/>
        <dbReference type="ChEBI" id="CHEBI:30013"/>
        <dbReference type="ChEBI" id="CHEBI:30616"/>
        <dbReference type="ChEBI" id="CHEBI:61977"/>
        <dbReference type="ChEBI" id="CHEBI:456216"/>
        <dbReference type="EC" id="2.7.11.1"/>
    </reaction>
    <physiologicalReaction direction="left-to-right" evidence="11">
        <dbReference type="Rhea" id="RHEA:46609"/>
    </physiologicalReaction>
</comment>
<comment type="cofactor">
    <cofactor evidence="1">
        <name>Mg(2+)</name>
        <dbReference type="ChEBI" id="CHEBI:18420"/>
    </cofactor>
</comment>
<comment type="subcellular location">
    <subcellularLocation>
        <location evidence="7">Endoplasmic reticulum membrane</location>
        <topology evidence="7">Single-pass type I membrane protein</topology>
    </subcellularLocation>
</comment>
<comment type="PTM">
    <text evidence="1">Autophosphorylated mainly on serine residues; phosphorylation enables nucleotide binding by the active site.</text>
</comment>
<comment type="disruption phenotype">
    <text evidence="9">Impairs ER stress-induced ER-phagy.</text>
</comment>
<comment type="similarity">
    <text evidence="3">Belongs to the protein kinase superfamily. Ser/Thr protein kinase family.</text>
</comment>
<reference key="1">
    <citation type="journal article" date="2002" name="Nature">
        <title>The genome sequence of Schizosaccharomyces pombe.</title>
        <authorList>
            <person name="Wood V."/>
            <person name="Gwilliam R."/>
            <person name="Rajandream M.A."/>
            <person name="Lyne M.H."/>
            <person name="Lyne R."/>
            <person name="Stewart A."/>
            <person name="Sgouros J.G."/>
            <person name="Peat N."/>
            <person name="Hayles J."/>
            <person name="Baker S.G."/>
            <person name="Basham D."/>
            <person name="Bowman S."/>
            <person name="Brooks K."/>
            <person name="Brown D."/>
            <person name="Brown S."/>
            <person name="Chillingworth T."/>
            <person name="Churcher C.M."/>
            <person name="Collins M."/>
            <person name="Connor R."/>
            <person name="Cronin A."/>
            <person name="Davis P."/>
            <person name="Feltwell T."/>
            <person name="Fraser A."/>
            <person name="Gentles S."/>
            <person name="Goble A."/>
            <person name="Hamlin N."/>
            <person name="Harris D.E."/>
            <person name="Hidalgo J."/>
            <person name="Hodgson G."/>
            <person name="Holroyd S."/>
            <person name="Hornsby T."/>
            <person name="Howarth S."/>
            <person name="Huckle E.J."/>
            <person name="Hunt S."/>
            <person name="Jagels K."/>
            <person name="James K.D."/>
            <person name="Jones L."/>
            <person name="Jones M."/>
            <person name="Leather S."/>
            <person name="McDonald S."/>
            <person name="McLean J."/>
            <person name="Mooney P."/>
            <person name="Moule S."/>
            <person name="Mungall K.L."/>
            <person name="Murphy L.D."/>
            <person name="Niblett D."/>
            <person name="Odell C."/>
            <person name="Oliver K."/>
            <person name="O'Neil S."/>
            <person name="Pearson D."/>
            <person name="Quail M.A."/>
            <person name="Rabbinowitsch E."/>
            <person name="Rutherford K.M."/>
            <person name="Rutter S."/>
            <person name="Saunders D."/>
            <person name="Seeger K."/>
            <person name="Sharp S."/>
            <person name="Skelton J."/>
            <person name="Simmonds M.N."/>
            <person name="Squares R."/>
            <person name="Squares S."/>
            <person name="Stevens K."/>
            <person name="Taylor K."/>
            <person name="Taylor R.G."/>
            <person name="Tivey A."/>
            <person name="Walsh S.V."/>
            <person name="Warren T."/>
            <person name="Whitehead S."/>
            <person name="Woodward J.R."/>
            <person name="Volckaert G."/>
            <person name="Aert R."/>
            <person name="Robben J."/>
            <person name="Grymonprez B."/>
            <person name="Weltjens I."/>
            <person name="Vanstreels E."/>
            <person name="Rieger M."/>
            <person name="Schaefer M."/>
            <person name="Mueller-Auer S."/>
            <person name="Gabel C."/>
            <person name="Fuchs M."/>
            <person name="Duesterhoeft A."/>
            <person name="Fritzc C."/>
            <person name="Holzer E."/>
            <person name="Moestl D."/>
            <person name="Hilbert H."/>
            <person name="Borzym K."/>
            <person name="Langer I."/>
            <person name="Beck A."/>
            <person name="Lehrach H."/>
            <person name="Reinhardt R."/>
            <person name="Pohl T.M."/>
            <person name="Eger P."/>
            <person name="Zimmermann W."/>
            <person name="Wedler H."/>
            <person name="Wambutt R."/>
            <person name="Purnelle B."/>
            <person name="Goffeau A."/>
            <person name="Cadieu E."/>
            <person name="Dreano S."/>
            <person name="Gloux S."/>
            <person name="Lelaure V."/>
            <person name="Mottier S."/>
            <person name="Galibert F."/>
            <person name="Aves S.J."/>
            <person name="Xiang Z."/>
            <person name="Hunt C."/>
            <person name="Moore K."/>
            <person name="Hurst S.M."/>
            <person name="Lucas M."/>
            <person name="Rochet M."/>
            <person name="Gaillardin C."/>
            <person name="Tallada V.A."/>
            <person name="Garzon A."/>
            <person name="Thode G."/>
            <person name="Daga R.R."/>
            <person name="Cruzado L."/>
            <person name="Jimenez J."/>
            <person name="Sanchez M."/>
            <person name="del Rey F."/>
            <person name="Benito J."/>
            <person name="Dominguez A."/>
            <person name="Revuelta J.L."/>
            <person name="Moreno S."/>
            <person name="Armstrong J."/>
            <person name="Forsburg S.L."/>
            <person name="Cerutti L."/>
            <person name="Lowe T."/>
            <person name="McCombie W.R."/>
            <person name="Paulsen I."/>
            <person name="Potashkin J."/>
            <person name="Shpakovski G.V."/>
            <person name="Ussery D."/>
            <person name="Barrell B.G."/>
            <person name="Nurse P."/>
        </authorList>
    </citation>
    <scope>NUCLEOTIDE SEQUENCE [LARGE SCALE GENOMIC DNA]</scope>
    <source>
        <strain>972 / ATCC 24843</strain>
    </source>
</reference>
<reference key="2">
    <citation type="journal article" date="2005" name="Eukaryot. Cell">
        <title>Systematic deletion analysis of fission yeast protein kinases.</title>
        <authorList>
            <person name="Bimbo A."/>
            <person name="Jia Y."/>
            <person name="Poh S.L."/>
            <person name="Karuturi R.K.M."/>
            <person name="den Elzen N."/>
            <person name="Peng X."/>
            <person name="Zheng L."/>
            <person name="O'Connell M."/>
            <person name="Liu E.T."/>
            <person name="Balasubramanian M.K."/>
            <person name="Liu J."/>
        </authorList>
    </citation>
    <scope>IDENTIFICATION</scope>
</reference>
<reference key="3">
    <citation type="journal article" date="2006" name="Nat. Biotechnol.">
        <title>ORFeome cloning and global analysis of protein localization in the fission yeast Schizosaccharomyces pombe.</title>
        <authorList>
            <person name="Matsuyama A."/>
            <person name="Arai R."/>
            <person name="Yashiroda Y."/>
            <person name="Shirai A."/>
            <person name="Kamata A."/>
            <person name="Sekido S."/>
            <person name="Kobayashi Y."/>
            <person name="Hashimoto A."/>
            <person name="Hamamoto M."/>
            <person name="Hiraoka Y."/>
            <person name="Horinouchi S."/>
            <person name="Yoshida M."/>
        </authorList>
    </citation>
    <scope>SUBCELLULAR LOCATION [LARGE SCALE ANALYSIS]</scope>
</reference>
<reference key="4">
    <citation type="journal article" date="2012" name="Elife">
        <title>The unfolded protein response in fission yeast modulates stability of select mRNAs to maintain protein homeostasis.</title>
        <authorList>
            <person name="Kimmig P."/>
            <person name="Diaz M."/>
            <person name="Zheng J."/>
            <person name="Williams C.C."/>
            <person name="Lang A."/>
            <person name="Aragon T."/>
            <person name="Li H."/>
            <person name="Walter P."/>
        </authorList>
    </citation>
    <scope>FUNCTION</scope>
    <scope>CATALYTIC ACTIVITY</scope>
    <scope>MUTAGENESIS OF HIS-1018</scope>
</reference>
<reference key="5">
    <citation type="journal article" date="2020" name="Mol. Cell">
        <title>A UPR-induced soluble ER-phagy receptor acts with VAPs to confer ER stress resistance.</title>
        <authorList>
            <person name="Zhao D."/>
            <person name="Zou C.X."/>
            <person name="Liu X.M."/>
            <person name="Jiang Z.D."/>
            <person name="Yu Z.Q."/>
            <person name="Suo F."/>
            <person name="Du T.Y."/>
            <person name="Dong M.Q."/>
            <person name="He W."/>
            <person name="Du L.L."/>
        </authorList>
    </citation>
    <scope>FUNCTION</scope>
    <scope>DISRUPTION PHENOTYPE</scope>
</reference>